<dbReference type="EMBL" id="CU329671">
    <property type="protein sequence ID" value="CAB54819.1"/>
    <property type="molecule type" value="Genomic_DNA"/>
</dbReference>
<dbReference type="PIR" id="T40555">
    <property type="entry name" value="T40555"/>
</dbReference>
<dbReference type="RefSeq" id="NP_595309.1">
    <property type="nucleotide sequence ID" value="NM_001021216.2"/>
</dbReference>
<dbReference type="SMR" id="Q9USQ8"/>
<dbReference type="BioGRID" id="277597">
    <property type="interactions" value="26"/>
</dbReference>
<dbReference type="STRING" id="284812.Q9USQ8"/>
<dbReference type="PaxDb" id="4896-SPBC577.11.1"/>
<dbReference type="EnsemblFungi" id="SPBC577.11.1">
    <property type="protein sequence ID" value="SPBC577.11.1:pep"/>
    <property type="gene ID" value="SPBC577.11"/>
</dbReference>
<dbReference type="KEGG" id="spo:2541082"/>
<dbReference type="PomBase" id="SPBC577.11"/>
<dbReference type="VEuPathDB" id="FungiDB:SPBC577.11"/>
<dbReference type="HOGENOM" id="CLU_1147759_0_0_1"/>
<dbReference type="InParanoid" id="Q9USQ8"/>
<dbReference type="OMA" id="WFARISK"/>
<dbReference type="PRO" id="PR:Q9USQ8"/>
<dbReference type="Proteomes" id="UP000002485">
    <property type="component" value="Chromosome II"/>
</dbReference>
<dbReference type="GO" id="GO:0005783">
    <property type="term" value="C:endoplasmic reticulum"/>
    <property type="evidence" value="ECO:0007005"/>
    <property type="project" value="PomBase"/>
</dbReference>
<dbReference type="GO" id="GO:0005794">
    <property type="term" value="C:Golgi apparatus"/>
    <property type="evidence" value="ECO:0007005"/>
    <property type="project" value="PomBase"/>
</dbReference>
<dbReference type="Gene3D" id="3.30.530.20">
    <property type="match status" value="1"/>
</dbReference>
<dbReference type="InterPro" id="IPR024500">
    <property type="entry name" value="DUF3074"/>
</dbReference>
<dbReference type="InterPro" id="IPR023393">
    <property type="entry name" value="START-like_dom_sf"/>
</dbReference>
<dbReference type="PANTHER" id="PTHR40370:SF1">
    <property type="entry name" value="DUF3074 DOMAIN-CONTAINING PROTEIN"/>
    <property type="match status" value="1"/>
</dbReference>
<dbReference type="PANTHER" id="PTHR40370">
    <property type="entry name" value="EXPRESSED PROTEIN"/>
    <property type="match status" value="1"/>
</dbReference>
<dbReference type="Pfam" id="PF11274">
    <property type="entry name" value="DUF3074"/>
    <property type="match status" value="1"/>
</dbReference>
<dbReference type="SUPFAM" id="SSF55961">
    <property type="entry name" value="Bet v1-like"/>
    <property type="match status" value="1"/>
</dbReference>
<comment type="subcellular location">
    <subcellularLocation>
        <location evidence="1">Endoplasmic reticulum</location>
    </subcellularLocation>
    <subcellularLocation>
        <location evidence="1">Golgi apparatus</location>
    </subcellularLocation>
</comment>
<gene>
    <name type="ORF">SPBC577.11</name>
</gene>
<accession>Q9USQ8</accession>
<feature type="chain" id="PRO_0000352827" description="Uncharacterized protein C577.11">
    <location>
        <begin position="1"/>
        <end position="239"/>
    </location>
</feature>
<keyword id="KW-0256">Endoplasmic reticulum</keyword>
<keyword id="KW-0333">Golgi apparatus</keyword>
<keyword id="KW-1185">Reference proteome</keyword>
<name>YN1B_SCHPO</name>
<reference key="1">
    <citation type="journal article" date="2002" name="Nature">
        <title>The genome sequence of Schizosaccharomyces pombe.</title>
        <authorList>
            <person name="Wood V."/>
            <person name="Gwilliam R."/>
            <person name="Rajandream M.A."/>
            <person name="Lyne M.H."/>
            <person name="Lyne R."/>
            <person name="Stewart A."/>
            <person name="Sgouros J.G."/>
            <person name="Peat N."/>
            <person name="Hayles J."/>
            <person name="Baker S.G."/>
            <person name="Basham D."/>
            <person name="Bowman S."/>
            <person name="Brooks K."/>
            <person name="Brown D."/>
            <person name="Brown S."/>
            <person name="Chillingworth T."/>
            <person name="Churcher C.M."/>
            <person name="Collins M."/>
            <person name="Connor R."/>
            <person name="Cronin A."/>
            <person name="Davis P."/>
            <person name="Feltwell T."/>
            <person name="Fraser A."/>
            <person name="Gentles S."/>
            <person name="Goble A."/>
            <person name="Hamlin N."/>
            <person name="Harris D.E."/>
            <person name="Hidalgo J."/>
            <person name="Hodgson G."/>
            <person name="Holroyd S."/>
            <person name="Hornsby T."/>
            <person name="Howarth S."/>
            <person name="Huckle E.J."/>
            <person name="Hunt S."/>
            <person name="Jagels K."/>
            <person name="James K.D."/>
            <person name="Jones L."/>
            <person name="Jones M."/>
            <person name="Leather S."/>
            <person name="McDonald S."/>
            <person name="McLean J."/>
            <person name="Mooney P."/>
            <person name="Moule S."/>
            <person name="Mungall K.L."/>
            <person name="Murphy L.D."/>
            <person name="Niblett D."/>
            <person name="Odell C."/>
            <person name="Oliver K."/>
            <person name="O'Neil S."/>
            <person name="Pearson D."/>
            <person name="Quail M.A."/>
            <person name="Rabbinowitsch E."/>
            <person name="Rutherford K.M."/>
            <person name="Rutter S."/>
            <person name="Saunders D."/>
            <person name="Seeger K."/>
            <person name="Sharp S."/>
            <person name="Skelton J."/>
            <person name="Simmonds M.N."/>
            <person name="Squares R."/>
            <person name="Squares S."/>
            <person name="Stevens K."/>
            <person name="Taylor K."/>
            <person name="Taylor R.G."/>
            <person name="Tivey A."/>
            <person name="Walsh S.V."/>
            <person name="Warren T."/>
            <person name="Whitehead S."/>
            <person name="Woodward J.R."/>
            <person name="Volckaert G."/>
            <person name="Aert R."/>
            <person name="Robben J."/>
            <person name="Grymonprez B."/>
            <person name="Weltjens I."/>
            <person name="Vanstreels E."/>
            <person name="Rieger M."/>
            <person name="Schaefer M."/>
            <person name="Mueller-Auer S."/>
            <person name="Gabel C."/>
            <person name="Fuchs M."/>
            <person name="Duesterhoeft A."/>
            <person name="Fritzc C."/>
            <person name="Holzer E."/>
            <person name="Moestl D."/>
            <person name="Hilbert H."/>
            <person name="Borzym K."/>
            <person name="Langer I."/>
            <person name="Beck A."/>
            <person name="Lehrach H."/>
            <person name="Reinhardt R."/>
            <person name="Pohl T.M."/>
            <person name="Eger P."/>
            <person name="Zimmermann W."/>
            <person name="Wedler H."/>
            <person name="Wambutt R."/>
            <person name="Purnelle B."/>
            <person name="Goffeau A."/>
            <person name="Cadieu E."/>
            <person name="Dreano S."/>
            <person name="Gloux S."/>
            <person name="Lelaure V."/>
            <person name="Mottier S."/>
            <person name="Galibert F."/>
            <person name="Aves S.J."/>
            <person name="Xiang Z."/>
            <person name="Hunt C."/>
            <person name="Moore K."/>
            <person name="Hurst S.M."/>
            <person name="Lucas M."/>
            <person name="Rochet M."/>
            <person name="Gaillardin C."/>
            <person name="Tallada V.A."/>
            <person name="Garzon A."/>
            <person name="Thode G."/>
            <person name="Daga R.R."/>
            <person name="Cruzado L."/>
            <person name="Jimenez J."/>
            <person name="Sanchez M."/>
            <person name="del Rey F."/>
            <person name="Benito J."/>
            <person name="Dominguez A."/>
            <person name="Revuelta J.L."/>
            <person name="Moreno S."/>
            <person name="Armstrong J."/>
            <person name="Forsburg S.L."/>
            <person name="Cerutti L."/>
            <person name="Lowe T."/>
            <person name="McCombie W.R."/>
            <person name="Paulsen I."/>
            <person name="Potashkin J."/>
            <person name="Shpakovski G.V."/>
            <person name="Ussery D."/>
            <person name="Barrell B.G."/>
            <person name="Nurse P."/>
        </authorList>
    </citation>
    <scope>NUCLEOTIDE SEQUENCE [LARGE SCALE GENOMIC DNA]</scope>
    <source>
        <strain>972 / ATCC 24843</strain>
    </source>
</reference>
<reference key="2">
    <citation type="journal article" date="2006" name="Nat. Biotechnol.">
        <title>ORFeome cloning and global analysis of protein localization in the fission yeast Schizosaccharomyces pombe.</title>
        <authorList>
            <person name="Matsuyama A."/>
            <person name="Arai R."/>
            <person name="Yashiroda Y."/>
            <person name="Shirai A."/>
            <person name="Kamata A."/>
            <person name="Sekido S."/>
            <person name="Kobayashi Y."/>
            <person name="Hashimoto A."/>
            <person name="Hamamoto M."/>
            <person name="Hiraoka Y."/>
            <person name="Horinouchi S."/>
            <person name="Yoshida M."/>
        </authorList>
    </citation>
    <scope>SUBCELLULAR LOCATION [LARGE SCALE ANALYSIS]</scope>
</reference>
<evidence type="ECO:0000269" key="1">
    <source>
    </source>
</evidence>
<proteinExistence type="predicted"/>
<protein>
    <recommendedName>
        <fullName>Uncharacterized protein C577.11</fullName>
    </recommendedName>
</protein>
<organism>
    <name type="scientific">Schizosaccharomyces pombe (strain 972 / ATCC 24843)</name>
    <name type="common">Fission yeast</name>
    <dbReference type="NCBI Taxonomy" id="284812"/>
    <lineage>
        <taxon>Eukaryota</taxon>
        <taxon>Fungi</taxon>
        <taxon>Dikarya</taxon>
        <taxon>Ascomycota</taxon>
        <taxon>Taphrinomycotina</taxon>
        <taxon>Schizosaccharomycetes</taxon>
        <taxon>Schizosaccharomycetales</taxon>
        <taxon>Schizosaccharomycetaceae</taxon>
        <taxon>Schizosaccharomyces</taxon>
    </lineage>
</organism>
<sequence>MQQDLFGSDSICPISSDDVLKATDPNFESWRERIVQDALKIVEQIPKWKHLGNHDGVALYEKAPAYTGHTWYGRVSKHTRSLKTFKKGLLYEHIKKEADYDPLVFSAHQLETIIEDEIEIWMYKYKTPWFFRNRVYRQLVVSVMLDPDSFIVLQTPVTYPGSSSGGGNGVVALYDSVDFVSKKLDGDGKEEGVLWICAVRNDYGSMFSGLFSDTTFTKSLVRQVKLYNEWLNRTYPRKG</sequence>